<evidence type="ECO:0000250" key="1"/>
<evidence type="ECO:0000255" key="2">
    <source>
        <dbReference type="HAMAP-Rule" id="MF_00403"/>
    </source>
</evidence>
<evidence type="ECO:0000305" key="3"/>
<comment type="function">
    <text evidence="2">With S4 and S5 plays an important role in translational accuracy.</text>
</comment>
<comment type="function">
    <text evidence="2">Interacts with and stabilizes bases of the 16S rRNA that are involved in tRNA selection in the A site and with the mRNA backbone. Located at the interface of the 30S and 50S subunits, it traverses the body of the 30S subunit contacting proteins on the other side and probably holding the rRNA structure together. The combined cluster of proteins S8, S12 and S17 appears to hold together the shoulder and platform of the 30S subunit.</text>
</comment>
<comment type="subunit">
    <text evidence="2">Part of the 30S ribosomal subunit. Contacts proteins S8 and S17. May interact with IF1 in the 30S initiation complex.</text>
</comment>
<comment type="similarity">
    <text evidence="2">Belongs to the universal ribosomal protein uS12 family.</text>
</comment>
<protein>
    <recommendedName>
        <fullName evidence="2">Small ribosomal subunit protein uS12</fullName>
    </recommendedName>
    <alternativeName>
        <fullName evidence="3">30S ribosomal protein S12</fullName>
    </alternativeName>
</protein>
<gene>
    <name evidence="2" type="primary">rpsL</name>
    <name type="ordered locus">ECUMN_3802</name>
</gene>
<name>RS12_ECOLU</name>
<keyword id="KW-0007">Acetylation</keyword>
<keyword id="KW-0488">Methylation</keyword>
<keyword id="KW-0687">Ribonucleoprotein</keyword>
<keyword id="KW-0689">Ribosomal protein</keyword>
<keyword id="KW-0694">RNA-binding</keyword>
<keyword id="KW-0699">rRNA-binding</keyword>
<keyword id="KW-0820">tRNA-binding</keyword>
<reference key="1">
    <citation type="journal article" date="2009" name="PLoS Genet.">
        <title>Organised genome dynamics in the Escherichia coli species results in highly diverse adaptive paths.</title>
        <authorList>
            <person name="Touchon M."/>
            <person name="Hoede C."/>
            <person name="Tenaillon O."/>
            <person name="Barbe V."/>
            <person name="Baeriswyl S."/>
            <person name="Bidet P."/>
            <person name="Bingen E."/>
            <person name="Bonacorsi S."/>
            <person name="Bouchier C."/>
            <person name="Bouvet O."/>
            <person name="Calteau A."/>
            <person name="Chiapello H."/>
            <person name="Clermont O."/>
            <person name="Cruveiller S."/>
            <person name="Danchin A."/>
            <person name="Diard M."/>
            <person name="Dossat C."/>
            <person name="Karoui M.E."/>
            <person name="Frapy E."/>
            <person name="Garry L."/>
            <person name="Ghigo J.M."/>
            <person name="Gilles A.M."/>
            <person name="Johnson J."/>
            <person name="Le Bouguenec C."/>
            <person name="Lescat M."/>
            <person name="Mangenot S."/>
            <person name="Martinez-Jehanne V."/>
            <person name="Matic I."/>
            <person name="Nassif X."/>
            <person name="Oztas S."/>
            <person name="Petit M.A."/>
            <person name="Pichon C."/>
            <person name="Rouy Z."/>
            <person name="Ruf C.S."/>
            <person name="Schneider D."/>
            <person name="Tourret J."/>
            <person name="Vacherie B."/>
            <person name="Vallenet D."/>
            <person name="Medigue C."/>
            <person name="Rocha E.P.C."/>
            <person name="Denamur E."/>
        </authorList>
    </citation>
    <scope>NUCLEOTIDE SEQUENCE [LARGE SCALE GENOMIC DNA]</scope>
    <source>
        <strain>UMN026 / ExPEC</strain>
    </source>
</reference>
<accession>B7NDV0</accession>
<sequence>MATVNQLVRKPRARKVAKSNVPALEACPQKRGVCTRVYTTTPKKPNSALRKVCRVRLTNGFEVTSYIGGEGHNLQEHSVILIRGGRVKDLPGVRYHTVRGALDCSGVKDRKQARSKYGVKRPKA</sequence>
<organism>
    <name type="scientific">Escherichia coli O17:K52:H18 (strain UMN026 / ExPEC)</name>
    <dbReference type="NCBI Taxonomy" id="585056"/>
    <lineage>
        <taxon>Bacteria</taxon>
        <taxon>Pseudomonadati</taxon>
        <taxon>Pseudomonadota</taxon>
        <taxon>Gammaproteobacteria</taxon>
        <taxon>Enterobacterales</taxon>
        <taxon>Enterobacteriaceae</taxon>
        <taxon>Escherichia</taxon>
    </lineage>
</organism>
<feature type="chain" id="PRO_1000194164" description="Small ribosomal subunit protein uS12">
    <location>
        <begin position="1"/>
        <end position="124"/>
    </location>
</feature>
<feature type="modified residue" description="3-methylthioaspartic acid" evidence="1">
    <location>
        <position position="89"/>
    </location>
</feature>
<feature type="modified residue" description="N6-acetyllysine" evidence="2">
    <location>
        <position position="108"/>
    </location>
</feature>
<dbReference type="EMBL" id="CU928163">
    <property type="protein sequence ID" value="CAR14950.1"/>
    <property type="molecule type" value="Genomic_DNA"/>
</dbReference>
<dbReference type="RefSeq" id="WP_000246815.1">
    <property type="nucleotide sequence ID" value="NC_011751.1"/>
</dbReference>
<dbReference type="RefSeq" id="YP_002414455.1">
    <property type="nucleotide sequence ID" value="NC_011751.1"/>
</dbReference>
<dbReference type="SMR" id="B7NDV0"/>
<dbReference type="STRING" id="585056.ECUMN_3802"/>
<dbReference type="GeneID" id="98390450"/>
<dbReference type="KEGG" id="eum:ECUMN_3802"/>
<dbReference type="PATRIC" id="fig|585056.7.peg.3976"/>
<dbReference type="HOGENOM" id="CLU_104295_1_2_6"/>
<dbReference type="PRO" id="PR:B7NDV0"/>
<dbReference type="Proteomes" id="UP000007097">
    <property type="component" value="Chromosome"/>
</dbReference>
<dbReference type="GO" id="GO:0015935">
    <property type="term" value="C:small ribosomal subunit"/>
    <property type="evidence" value="ECO:0007669"/>
    <property type="project" value="InterPro"/>
</dbReference>
<dbReference type="GO" id="GO:0019843">
    <property type="term" value="F:rRNA binding"/>
    <property type="evidence" value="ECO:0007669"/>
    <property type="project" value="UniProtKB-UniRule"/>
</dbReference>
<dbReference type="GO" id="GO:0003735">
    <property type="term" value="F:structural constituent of ribosome"/>
    <property type="evidence" value="ECO:0007669"/>
    <property type="project" value="InterPro"/>
</dbReference>
<dbReference type="GO" id="GO:0000049">
    <property type="term" value="F:tRNA binding"/>
    <property type="evidence" value="ECO:0007669"/>
    <property type="project" value="UniProtKB-UniRule"/>
</dbReference>
<dbReference type="GO" id="GO:0006412">
    <property type="term" value="P:translation"/>
    <property type="evidence" value="ECO:0007669"/>
    <property type="project" value="UniProtKB-UniRule"/>
</dbReference>
<dbReference type="CDD" id="cd03368">
    <property type="entry name" value="Ribosomal_S12"/>
    <property type="match status" value="1"/>
</dbReference>
<dbReference type="FunFam" id="2.40.50.140:FF:000001">
    <property type="entry name" value="30S ribosomal protein S12"/>
    <property type="match status" value="1"/>
</dbReference>
<dbReference type="Gene3D" id="2.40.50.140">
    <property type="entry name" value="Nucleic acid-binding proteins"/>
    <property type="match status" value="1"/>
</dbReference>
<dbReference type="HAMAP" id="MF_00403_B">
    <property type="entry name" value="Ribosomal_uS12_B"/>
    <property type="match status" value="1"/>
</dbReference>
<dbReference type="InterPro" id="IPR012340">
    <property type="entry name" value="NA-bd_OB-fold"/>
</dbReference>
<dbReference type="InterPro" id="IPR006032">
    <property type="entry name" value="Ribosomal_uS12"/>
</dbReference>
<dbReference type="InterPro" id="IPR005679">
    <property type="entry name" value="Ribosomal_uS12_bac"/>
</dbReference>
<dbReference type="NCBIfam" id="TIGR00981">
    <property type="entry name" value="rpsL_bact"/>
    <property type="match status" value="1"/>
</dbReference>
<dbReference type="PANTHER" id="PTHR11652">
    <property type="entry name" value="30S RIBOSOMAL PROTEIN S12 FAMILY MEMBER"/>
    <property type="match status" value="1"/>
</dbReference>
<dbReference type="Pfam" id="PF00164">
    <property type="entry name" value="Ribosom_S12_S23"/>
    <property type="match status" value="1"/>
</dbReference>
<dbReference type="PIRSF" id="PIRSF002133">
    <property type="entry name" value="Ribosomal_S12/S23"/>
    <property type="match status" value="1"/>
</dbReference>
<dbReference type="PRINTS" id="PR01034">
    <property type="entry name" value="RIBOSOMALS12"/>
</dbReference>
<dbReference type="SUPFAM" id="SSF50249">
    <property type="entry name" value="Nucleic acid-binding proteins"/>
    <property type="match status" value="1"/>
</dbReference>
<dbReference type="PROSITE" id="PS00055">
    <property type="entry name" value="RIBOSOMAL_S12"/>
    <property type="match status" value="1"/>
</dbReference>
<proteinExistence type="inferred from homology"/>